<evidence type="ECO:0000255" key="1">
    <source>
        <dbReference type="HAMAP-Rule" id="MF_00445"/>
    </source>
</evidence>
<name>NUON_SULNB</name>
<organism>
    <name type="scientific">Sulfurovum sp. (strain NBC37-1)</name>
    <dbReference type="NCBI Taxonomy" id="387093"/>
    <lineage>
        <taxon>Bacteria</taxon>
        <taxon>Pseudomonadati</taxon>
        <taxon>Campylobacterota</taxon>
        <taxon>Epsilonproteobacteria</taxon>
        <taxon>Campylobacterales</taxon>
        <taxon>Sulfurovaceae</taxon>
        <taxon>Sulfurovum</taxon>
    </lineage>
</organism>
<dbReference type="EC" id="7.1.1.-" evidence="1"/>
<dbReference type="EMBL" id="AP009179">
    <property type="protein sequence ID" value="BAF73158.1"/>
    <property type="molecule type" value="Genomic_DNA"/>
</dbReference>
<dbReference type="RefSeq" id="WP_012083992.1">
    <property type="nucleotide sequence ID" value="NC_009663.1"/>
</dbReference>
<dbReference type="SMR" id="A6QCE9"/>
<dbReference type="STRING" id="387093.SUN_2218"/>
<dbReference type="KEGG" id="sun:SUN_2218"/>
<dbReference type="eggNOG" id="COG1007">
    <property type="taxonomic scope" value="Bacteria"/>
</dbReference>
<dbReference type="HOGENOM" id="CLU_007100_1_4_7"/>
<dbReference type="OrthoDB" id="9768329at2"/>
<dbReference type="Proteomes" id="UP000006378">
    <property type="component" value="Chromosome"/>
</dbReference>
<dbReference type="GO" id="GO:0005886">
    <property type="term" value="C:plasma membrane"/>
    <property type="evidence" value="ECO:0007669"/>
    <property type="project" value="UniProtKB-SubCell"/>
</dbReference>
<dbReference type="GO" id="GO:0008137">
    <property type="term" value="F:NADH dehydrogenase (ubiquinone) activity"/>
    <property type="evidence" value="ECO:0007669"/>
    <property type="project" value="InterPro"/>
</dbReference>
<dbReference type="GO" id="GO:0050136">
    <property type="term" value="F:NADH:ubiquinone reductase (non-electrogenic) activity"/>
    <property type="evidence" value="ECO:0007669"/>
    <property type="project" value="UniProtKB-UniRule"/>
</dbReference>
<dbReference type="GO" id="GO:0048038">
    <property type="term" value="F:quinone binding"/>
    <property type="evidence" value="ECO:0007669"/>
    <property type="project" value="UniProtKB-KW"/>
</dbReference>
<dbReference type="GO" id="GO:0042773">
    <property type="term" value="P:ATP synthesis coupled electron transport"/>
    <property type="evidence" value="ECO:0007669"/>
    <property type="project" value="InterPro"/>
</dbReference>
<dbReference type="HAMAP" id="MF_00445">
    <property type="entry name" value="NDH1_NuoN_1"/>
    <property type="match status" value="1"/>
</dbReference>
<dbReference type="InterPro" id="IPR010096">
    <property type="entry name" value="NADH-Q_OxRdtase_suN/2"/>
</dbReference>
<dbReference type="InterPro" id="IPR001750">
    <property type="entry name" value="ND/Mrp_TM"/>
</dbReference>
<dbReference type="NCBIfam" id="TIGR01770">
    <property type="entry name" value="NDH_I_N"/>
    <property type="match status" value="1"/>
</dbReference>
<dbReference type="NCBIfam" id="NF004444">
    <property type="entry name" value="PRK05777.2-2"/>
    <property type="match status" value="1"/>
</dbReference>
<dbReference type="PANTHER" id="PTHR22773">
    <property type="entry name" value="NADH DEHYDROGENASE"/>
    <property type="match status" value="1"/>
</dbReference>
<dbReference type="Pfam" id="PF00361">
    <property type="entry name" value="Proton_antipo_M"/>
    <property type="match status" value="1"/>
</dbReference>
<feature type="chain" id="PRO_0000391233" description="NADH-quinone oxidoreductase subunit N">
    <location>
        <begin position="1"/>
        <end position="496"/>
    </location>
</feature>
<feature type="transmembrane region" description="Helical" evidence="1">
    <location>
        <begin position="12"/>
        <end position="32"/>
    </location>
</feature>
<feature type="transmembrane region" description="Helical" evidence="1">
    <location>
        <begin position="43"/>
        <end position="63"/>
    </location>
</feature>
<feature type="transmembrane region" description="Helical" evidence="1">
    <location>
        <begin position="79"/>
        <end position="99"/>
    </location>
</feature>
<feature type="transmembrane region" description="Helical" evidence="1">
    <location>
        <begin position="108"/>
        <end position="128"/>
    </location>
</feature>
<feature type="transmembrane region" description="Helical" evidence="1">
    <location>
        <begin position="132"/>
        <end position="152"/>
    </location>
</feature>
<feature type="transmembrane region" description="Helical" evidence="1">
    <location>
        <begin position="166"/>
        <end position="186"/>
    </location>
</feature>
<feature type="transmembrane region" description="Helical" evidence="1">
    <location>
        <begin position="207"/>
        <end position="227"/>
    </location>
</feature>
<feature type="transmembrane region" description="Helical" evidence="1">
    <location>
        <begin position="257"/>
        <end position="277"/>
    </location>
</feature>
<feature type="transmembrane region" description="Helical" evidence="1">
    <location>
        <begin position="280"/>
        <end position="300"/>
    </location>
</feature>
<feature type="transmembrane region" description="Helical" evidence="1">
    <location>
        <begin position="306"/>
        <end position="326"/>
    </location>
</feature>
<feature type="transmembrane region" description="Helical" evidence="1">
    <location>
        <begin position="333"/>
        <end position="353"/>
    </location>
</feature>
<feature type="transmembrane region" description="Helical" evidence="1">
    <location>
        <begin position="383"/>
        <end position="403"/>
    </location>
</feature>
<feature type="transmembrane region" description="Helical" evidence="1">
    <location>
        <begin position="416"/>
        <end position="436"/>
    </location>
</feature>
<feature type="transmembrane region" description="Helical" evidence="1">
    <location>
        <begin position="464"/>
        <end position="484"/>
    </location>
</feature>
<protein>
    <recommendedName>
        <fullName evidence="1">NADH-quinone oxidoreductase subunit N</fullName>
        <ecNumber evidence="1">7.1.1.-</ecNumber>
    </recommendedName>
    <alternativeName>
        <fullName evidence="1">NADH dehydrogenase I subunit N</fullName>
    </alternativeName>
    <alternativeName>
        <fullName evidence="1">NDH-1 subunit N</fullName>
    </alternativeName>
</protein>
<reference key="1">
    <citation type="journal article" date="2007" name="Proc. Natl. Acad. Sci. U.S.A.">
        <title>Deep-sea vent epsilon-proteobacterial genomes provide insights into emergence of pathogens.</title>
        <authorList>
            <person name="Nakagawa S."/>
            <person name="Takaki Y."/>
            <person name="Shimamura S."/>
            <person name="Reysenbach A.-L."/>
            <person name="Takai K."/>
            <person name="Horikoshi K."/>
        </authorList>
    </citation>
    <scope>NUCLEOTIDE SEQUENCE [LARGE SCALE GENOMIC DNA]</scope>
    <source>
        <strain>NBC37-1</strain>
    </source>
</reference>
<sequence length="496" mass="54691">MLQPINVSMESLNLITLAPMLVAIAGGLIILILDLINKNLHKSLYVMLTILILVIDFGATLGLNVNERGFFDVMLIDGVSIVSQLLIIVASILFTPLALTSKRFHEYSYPEFFALFLFMVAGFQFMVASDNLILIFVGLETASLSLYTLIALHNRSNSYEAAVKYFTMGALAAAFFAMGSAVIYALTGSIELYRVADVLAARMGETGLMIAIFGSSVLLLVAFAFKLSLFPFHTWAPDVYEGASAPLAGYMSVVPKVAAFVVSIRIFGMYIDLGVEWVRVVILVLAVLTMTLANLMALVQEDVKRMLAYSSISHAGFIIAALALDTTEGTTAIFFYYGLFMFTNLGAFAMLWMSRHKNRRFNARFDHPYEKFAGFIKIMPMGAVIMAIFMLSLAGVPPFSIFWGKIYVMQAAVNSGYVWLAIVMGLNSAIAAYYYLKLVVYMFLKDPVKDVDTVYYNLSKPLMAVVGFAAVATIAAIFYVQPLVSYIYYMISASGY</sequence>
<gene>
    <name evidence="1" type="primary">nuoN</name>
    <name type="ordered locus">SUN_2218</name>
</gene>
<keyword id="KW-0997">Cell inner membrane</keyword>
<keyword id="KW-1003">Cell membrane</keyword>
<keyword id="KW-0472">Membrane</keyword>
<keyword id="KW-0520">NAD</keyword>
<keyword id="KW-0874">Quinone</keyword>
<keyword id="KW-1278">Translocase</keyword>
<keyword id="KW-0812">Transmembrane</keyword>
<keyword id="KW-1133">Transmembrane helix</keyword>
<keyword id="KW-0813">Transport</keyword>
<keyword id="KW-0830">Ubiquinone</keyword>
<accession>A6QCE9</accession>
<proteinExistence type="inferred from homology"/>
<comment type="function">
    <text evidence="1">NDH-1 shuttles electrons from NADH, via FMN and iron-sulfur (Fe-S) centers, to quinones in the respiratory chain. The immediate electron acceptor for the enzyme in this species is believed to be ubiquinone. Couples the redox reaction to proton translocation (for every two electrons transferred, four hydrogen ions are translocated across the cytoplasmic membrane), and thus conserves the redox energy in a proton gradient.</text>
</comment>
<comment type="catalytic activity">
    <reaction evidence="1">
        <text>a quinone + NADH + 5 H(+)(in) = a quinol + NAD(+) + 4 H(+)(out)</text>
        <dbReference type="Rhea" id="RHEA:57888"/>
        <dbReference type="ChEBI" id="CHEBI:15378"/>
        <dbReference type="ChEBI" id="CHEBI:24646"/>
        <dbReference type="ChEBI" id="CHEBI:57540"/>
        <dbReference type="ChEBI" id="CHEBI:57945"/>
        <dbReference type="ChEBI" id="CHEBI:132124"/>
    </reaction>
</comment>
<comment type="subunit">
    <text evidence="1">NDH-1 is composed of 14 different subunits. Subunits NuoA, H, J, K, L, M, N constitute the membrane sector of the complex.</text>
</comment>
<comment type="subcellular location">
    <subcellularLocation>
        <location evidence="1">Cell inner membrane</location>
        <topology evidence="1">Multi-pass membrane protein</topology>
    </subcellularLocation>
</comment>
<comment type="similarity">
    <text evidence="1">Belongs to the complex I subunit 2 family.</text>
</comment>